<keyword id="KW-0520">NAD</keyword>
<keyword id="KW-0560">Oxidoreductase</keyword>
<comment type="catalytic activity">
    <reaction>
        <text>(R)-lactate + NAD(+) = pyruvate + NADH + H(+)</text>
        <dbReference type="Rhea" id="RHEA:16369"/>
        <dbReference type="ChEBI" id="CHEBI:15361"/>
        <dbReference type="ChEBI" id="CHEBI:15378"/>
        <dbReference type="ChEBI" id="CHEBI:16004"/>
        <dbReference type="ChEBI" id="CHEBI:57540"/>
        <dbReference type="ChEBI" id="CHEBI:57945"/>
        <dbReference type="EC" id="1.1.1.28"/>
    </reaction>
</comment>
<comment type="subunit">
    <text>Homodimer.</text>
</comment>
<comment type="miscellaneous">
    <text>Also active on D-glycerate.</text>
</comment>
<comment type="similarity">
    <text evidence="3">Belongs to the D-isomer specific 2-hydroxyacid dehydrogenase family.</text>
</comment>
<comment type="caution">
    <text evidence="4">Was originally thought to originate from L.plantarum.</text>
</comment>
<organism>
    <name type="scientific">Lactiplantibacillus pentosus</name>
    <name type="common">Lactobacillus pentosus</name>
    <dbReference type="NCBI Taxonomy" id="1589"/>
    <lineage>
        <taxon>Bacteria</taxon>
        <taxon>Bacillati</taxon>
        <taxon>Bacillota</taxon>
        <taxon>Bacilli</taxon>
        <taxon>Lactobacillales</taxon>
        <taxon>Lactobacillaceae</taxon>
        <taxon>Lactiplantibacillus</taxon>
    </lineage>
</organism>
<evidence type="ECO:0000250" key="1">
    <source>
        <dbReference type="UniProtKB" id="P26297"/>
    </source>
</evidence>
<evidence type="ECO:0000250" key="2">
    <source>
        <dbReference type="UniProtKB" id="P30901"/>
    </source>
</evidence>
<evidence type="ECO:0000305" key="3"/>
<evidence type="ECO:0000305" key="4">
    <source>
    </source>
</evidence>
<accession>P26298</accession>
<feature type="chain" id="PRO_0000075956" description="D-lactate dehydrogenase">
    <location>
        <begin position="1"/>
        <end position="332"/>
    </location>
</feature>
<feature type="active site" evidence="1">
    <location>
        <position position="235"/>
    </location>
</feature>
<feature type="active site" evidence="1">
    <location>
        <position position="264"/>
    </location>
</feature>
<feature type="active site" description="Proton donor" evidence="1">
    <location>
        <position position="296"/>
    </location>
</feature>
<feature type="binding site" evidence="2">
    <location>
        <begin position="155"/>
        <end position="156"/>
    </location>
    <ligand>
        <name>NAD(+)</name>
        <dbReference type="ChEBI" id="CHEBI:57540"/>
    </ligand>
</feature>
<feature type="binding site" evidence="1">
    <location>
        <position position="175"/>
    </location>
    <ligand>
        <name>NAD(+)</name>
        <dbReference type="ChEBI" id="CHEBI:57540"/>
    </ligand>
</feature>
<feature type="binding site" evidence="2">
    <location>
        <begin position="206"/>
        <end position="207"/>
    </location>
    <ligand>
        <name>NAD(+)</name>
        <dbReference type="ChEBI" id="CHEBI:57540"/>
    </ligand>
</feature>
<feature type="binding site" evidence="2">
    <location>
        <position position="212"/>
    </location>
    <ligand>
        <name>NAD(+)</name>
        <dbReference type="ChEBI" id="CHEBI:57540"/>
    </ligand>
</feature>
<feature type="binding site" evidence="2">
    <location>
        <begin position="233"/>
        <end position="235"/>
    </location>
    <ligand>
        <name>NAD(+)</name>
        <dbReference type="ChEBI" id="CHEBI:57540"/>
    </ligand>
</feature>
<reference key="1">
    <citation type="journal article" date="1991" name="J. Biol. Chem.">
        <title>D-lactate dehydrogenase is a member of the D-isomer-specific 2-hydroxyacid dehydrogenase family. Cloning, sequencing, and expression in Escherichia coli of the D-lactate dehydrogenase gene of Lactobacillus plantarum.</title>
        <authorList>
            <person name="Ohta T."/>
            <person name="Taguchi H."/>
        </authorList>
    </citation>
    <scope>NUCLEOTIDE SEQUENCE [GENOMIC DNA]</scope>
    <source>
        <strain>ATCC 8041 / DSM 20314 / BCRC 11053 / JCM 1558 / KCTC 3120 / LMG 10755 / NBRC 106467 / NCDO 363 / NCIMB 8026 / 124-2</strain>
    </source>
</reference>
<reference key="2">
    <citation type="journal article" date="1996" name="Structure">
        <title>Insights into substrate binding by D-2-ketoacid dehydrogenases from the structure of Lactobacillus pentosus D-lactate dehydrogenase.</title>
        <authorList>
            <person name="Stoll V.S."/>
            <person name="Kimber M.S."/>
            <person name="Pai E.F."/>
        </authorList>
    </citation>
    <scope>X-RAY CRYSTALLOGRAPHY (2.6 ANGSTROMS)</scope>
</reference>
<name>LDHD_LACPE</name>
<dbReference type="EC" id="1.1.1.28"/>
<dbReference type="EMBL" id="D90339">
    <property type="protein sequence ID" value="BAA14352.1"/>
    <property type="molecule type" value="Genomic_DNA"/>
</dbReference>
<dbReference type="PIR" id="A40885">
    <property type="entry name" value="A40885"/>
</dbReference>
<dbReference type="SMR" id="P26298"/>
<dbReference type="STRING" id="1589.GCA_001188985_01186"/>
<dbReference type="SABIO-RK" id="P26298"/>
<dbReference type="GO" id="GO:0008720">
    <property type="term" value="F:D-lactate dehydrogenase activity"/>
    <property type="evidence" value="ECO:0007669"/>
    <property type="project" value="UniProtKB-EC"/>
</dbReference>
<dbReference type="GO" id="GO:0051287">
    <property type="term" value="F:NAD binding"/>
    <property type="evidence" value="ECO:0007669"/>
    <property type="project" value="InterPro"/>
</dbReference>
<dbReference type="CDD" id="cd12186">
    <property type="entry name" value="LDH"/>
    <property type="match status" value="1"/>
</dbReference>
<dbReference type="Gene3D" id="3.40.50.720">
    <property type="entry name" value="NAD(P)-binding Rossmann-like Domain"/>
    <property type="match status" value="2"/>
</dbReference>
<dbReference type="InterPro" id="IPR006139">
    <property type="entry name" value="D-isomer_2_OHA_DH_cat_dom"/>
</dbReference>
<dbReference type="InterPro" id="IPR029753">
    <property type="entry name" value="D-isomer_DH_CS"/>
</dbReference>
<dbReference type="InterPro" id="IPR029752">
    <property type="entry name" value="D-isomer_DH_CS1"/>
</dbReference>
<dbReference type="InterPro" id="IPR006140">
    <property type="entry name" value="D-isomer_DH_NAD-bd"/>
</dbReference>
<dbReference type="InterPro" id="IPR036291">
    <property type="entry name" value="NAD(P)-bd_dom_sf"/>
</dbReference>
<dbReference type="PANTHER" id="PTHR43026">
    <property type="entry name" value="2-HYDROXYACID DEHYDROGENASE HOMOLOG 1-RELATED"/>
    <property type="match status" value="1"/>
</dbReference>
<dbReference type="PANTHER" id="PTHR43026:SF1">
    <property type="entry name" value="2-HYDROXYACID DEHYDROGENASE HOMOLOG 1-RELATED"/>
    <property type="match status" value="1"/>
</dbReference>
<dbReference type="Pfam" id="PF00389">
    <property type="entry name" value="2-Hacid_dh"/>
    <property type="match status" value="1"/>
</dbReference>
<dbReference type="Pfam" id="PF02826">
    <property type="entry name" value="2-Hacid_dh_C"/>
    <property type="match status" value="1"/>
</dbReference>
<dbReference type="SUPFAM" id="SSF52283">
    <property type="entry name" value="Formate/glycerate dehydrogenase catalytic domain-like"/>
    <property type="match status" value="1"/>
</dbReference>
<dbReference type="SUPFAM" id="SSF51735">
    <property type="entry name" value="NAD(P)-binding Rossmann-fold domains"/>
    <property type="match status" value="1"/>
</dbReference>
<dbReference type="PROSITE" id="PS00065">
    <property type="entry name" value="D_2_HYDROXYACID_DH_1"/>
    <property type="match status" value="1"/>
</dbReference>
<dbReference type="PROSITE" id="PS00670">
    <property type="entry name" value="D_2_HYDROXYACID_DH_2"/>
    <property type="match status" value="1"/>
</dbReference>
<dbReference type="PROSITE" id="PS00671">
    <property type="entry name" value="D_2_HYDROXYACID_DH_3"/>
    <property type="match status" value="1"/>
</dbReference>
<protein>
    <recommendedName>
        <fullName>D-lactate dehydrogenase</fullName>
        <shortName>D-LDH</shortName>
        <ecNumber>1.1.1.28</ecNumber>
    </recommendedName>
    <alternativeName>
        <fullName>D-specific 2-hydroxyacid dehydrogenase</fullName>
    </alternativeName>
</protein>
<proteinExistence type="evidence at protein level"/>
<sequence length="332" mass="37183">MKIIAYAVRDDERPFFDTWMKENPDVEVKLVPELLTEDNVDLAKGFDGADVYQQKDYTAEVLNKLADEGVKNISLRNVGVDNLDVPTVKARGLNISNVPAYSPNAIAELSVTQLMQLLRQTPMFNKKLAKQDFRWAPDIAKELNTMTVGVIGTGRIGRAAIDIFKGFGAKVIGYDVYRNAELEKEGMYVDTLDELYAQADVITLHVPALKDNYHMLNADAFSKMKDGAYILNFARGTLIDSEDLIKALDSGKVAGAALVTYEYETKIFNKDLEGQTIDDKVFMNLFNRDNVLITPHTAFYTETAVHNMVHVSMNSNKQFIETGKADTQVKFD</sequence>